<sequence>MHYVTPDLCDAYPELVQVVEPMFSNFGGRDSFGGEIVTIKCFEDNSLVKEQVDKDGKGKVLVVDGGGSLRRALLGDMLAEKAAKNGWEGIVVYGCIRDVDVIAQTDLGVQALASHPLKTDKRGIGDLNVAVTFGGVTFRPGEFVYADNNGIIVSPQALKMPE</sequence>
<organism>
    <name type="scientific">Pseudomonas aeruginosa (strain UCBPP-PA14)</name>
    <dbReference type="NCBI Taxonomy" id="208963"/>
    <lineage>
        <taxon>Bacteria</taxon>
        <taxon>Pseudomonadati</taxon>
        <taxon>Pseudomonadota</taxon>
        <taxon>Gammaproteobacteria</taxon>
        <taxon>Pseudomonadales</taxon>
        <taxon>Pseudomonadaceae</taxon>
        <taxon>Pseudomonas</taxon>
    </lineage>
</organism>
<feature type="chain" id="PRO_1000013857" description="Putative 4-hydroxy-4-methyl-2-oxoglutarate aldolase">
    <location>
        <begin position="1"/>
        <end position="162"/>
    </location>
</feature>
<feature type="binding site" evidence="1">
    <location>
        <begin position="75"/>
        <end position="78"/>
    </location>
    <ligand>
        <name>substrate</name>
    </ligand>
</feature>
<feature type="binding site" evidence="1">
    <location>
        <position position="97"/>
    </location>
    <ligand>
        <name>substrate</name>
    </ligand>
</feature>
<feature type="binding site" evidence="1">
    <location>
        <position position="98"/>
    </location>
    <ligand>
        <name>a divalent metal cation</name>
        <dbReference type="ChEBI" id="CHEBI:60240"/>
    </ligand>
</feature>
<dbReference type="EC" id="4.1.3.17"/>
<dbReference type="EC" id="4.1.1.112"/>
<dbReference type="EMBL" id="CP000438">
    <property type="protein sequence ID" value="ABJ10958.1"/>
    <property type="molecule type" value="Genomic_DNA"/>
</dbReference>
<dbReference type="SMR" id="Q02KR3"/>
<dbReference type="KEGG" id="pau:PA14_41640"/>
<dbReference type="PseudoCAP" id="PA14_41640"/>
<dbReference type="HOGENOM" id="CLU_072626_4_0_6"/>
<dbReference type="BioCyc" id="PAER208963:G1G74-3489-MONOMER"/>
<dbReference type="Proteomes" id="UP000000653">
    <property type="component" value="Chromosome"/>
</dbReference>
<dbReference type="GO" id="GO:0047443">
    <property type="term" value="F:4-hydroxy-4-methyl-2-oxoglutarate aldolase activity"/>
    <property type="evidence" value="ECO:0007669"/>
    <property type="project" value="UniProtKB-EC"/>
</dbReference>
<dbReference type="GO" id="GO:0046872">
    <property type="term" value="F:metal ion binding"/>
    <property type="evidence" value="ECO:0007669"/>
    <property type="project" value="UniProtKB-KW"/>
</dbReference>
<dbReference type="GO" id="GO:0008948">
    <property type="term" value="F:oxaloacetate decarboxylase activity"/>
    <property type="evidence" value="ECO:0007669"/>
    <property type="project" value="UniProtKB-EC"/>
</dbReference>
<dbReference type="GO" id="GO:0008428">
    <property type="term" value="F:ribonuclease inhibitor activity"/>
    <property type="evidence" value="ECO:0007669"/>
    <property type="project" value="InterPro"/>
</dbReference>
<dbReference type="GO" id="GO:0051252">
    <property type="term" value="P:regulation of RNA metabolic process"/>
    <property type="evidence" value="ECO:0007669"/>
    <property type="project" value="InterPro"/>
</dbReference>
<dbReference type="CDD" id="cd16841">
    <property type="entry name" value="RraA_family"/>
    <property type="match status" value="1"/>
</dbReference>
<dbReference type="Gene3D" id="3.50.30.40">
    <property type="entry name" value="Ribonuclease E inhibitor RraA/RraA-like"/>
    <property type="match status" value="1"/>
</dbReference>
<dbReference type="InterPro" id="IPR010203">
    <property type="entry name" value="RraA"/>
</dbReference>
<dbReference type="InterPro" id="IPR005493">
    <property type="entry name" value="RraA/RraA-like"/>
</dbReference>
<dbReference type="InterPro" id="IPR036704">
    <property type="entry name" value="RraA/RraA-like_sf"/>
</dbReference>
<dbReference type="NCBIfam" id="TIGR01935">
    <property type="entry name" value="NOT-MenG"/>
    <property type="match status" value="1"/>
</dbReference>
<dbReference type="NCBIfam" id="NF006875">
    <property type="entry name" value="PRK09372.1"/>
    <property type="match status" value="1"/>
</dbReference>
<dbReference type="NCBIfam" id="NF009134">
    <property type="entry name" value="PRK12487.1"/>
    <property type="match status" value="1"/>
</dbReference>
<dbReference type="PANTHER" id="PTHR33254">
    <property type="entry name" value="4-HYDROXY-4-METHYL-2-OXOGLUTARATE ALDOLASE 3-RELATED"/>
    <property type="match status" value="1"/>
</dbReference>
<dbReference type="PANTHER" id="PTHR33254:SF29">
    <property type="entry name" value="REGULATOR OF RIBONUCLEASE ACTIVITY A"/>
    <property type="match status" value="1"/>
</dbReference>
<dbReference type="Pfam" id="PF03737">
    <property type="entry name" value="RraA-like"/>
    <property type="match status" value="1"/>
</dbReference>
<dbReference type="SUPFAM" id="SSF89562">
    <property type="entry name" value="RraA-like"/>
    <property type="match status" value="1"/>
</dbReference>
<reference key="1">
    <citation type="journal article" date="2006" name="Genome Biol.">
        <title>Genomic analysis reveals that Pseudomonas aeruginosa virulence is combinatorial.</title>
        <authorList>
            <person name="Lee D.G."/>
            <person name="Urbach J.M."/>
            <person name="Wu G."/>
            <person name="Liberati N.T."/>
            <person name="Feinbaum R.L."/>
            <person name="Miyata S."/>
            <person name="Diggins L.T."/>
            <person name="He J."/>
            <person name="Saucier M."/>
            <person name="Deziel E."/>
            <person name="Friedman L."/>
            <person name="Li L."/>
            <person name="Grills G."/>
            <person name="Montgomery K."/>
            <person name="Kucherlapati R."/>
            <person name="Rahme L.G."/>
            <person name="Ausubel F.M."/>
        </authorList>
    </citation>
    <scope>NUCLEOTIDE SEQUENCE [LARGE SCALE GENOMIC DNA]</scope>
    <source>
        <strain>UCBPP-PA14</strain>
    </source>
</reference>
<reference key="2">
    <citation type="journal article" date="2014" name="Anal. Bioanal. Chem.">
        <title>Potential of liquid-isoelectric-focusing protein fractionation to improve phosphoprotein characterization of Pseudomonas aeruginosa PA14.</title>
        <authorList>
            <person name="Ouidir T."/>
            <person name="Jarnier F."/>
            <person name="Cosette P."/>
            <person name="Jouenne T."/>
            <person name="Hardouin J."/>
        </authorList>
    </citation>
    <scope>IDENTIFICATION BY MASS SPECTROMETRY</scope>
    <source>
        <strain>UCBPP-PA14</strain>
    </source>
</reference>
<evidence type="ECO:0000250" key="1"/>
<evidence type="ECO:0000305" key="2"/>
<gene>
    <name type="ordered locus">PA14_41640</name>
</gene>
<protein>
    <recommendedName>
        <fullName>Putative 4-hydroxy-4-methyl-2-oxoglutarate aldolase</fullName>
        <shortName>HMG aldolase</shortName>
        <ecNumber>4.1.3.17</ecNumber>
    </recommendedName>
    <alternativeName>
        <fullName>Oxaloacetate decarboxylase</fullName>
        <shortName>OAA decarboxylase</shortName>
        <ecNumber>4.1.1.112</ecNumber>
    </alternativeName>
    <alternativeName>
        <fullName>Regulator of ribonuclease activity homolog</fullName>
    </alternativeName>
    <alternativeName>
        <fullName>RraA-like protein</fullName>
    </alternativeName>
</protein>
<name>RRAAH_PSEAB</name>
<proteinExistence type="evidence at protein level"/>
<keyword id="KW-0456">Lyase</keyword>
<keyword id="KW-0479">Metal-binding</keyword>
<comment type="function">
    <text evidence="1">Catalyzes the aldol cleavage of 4-hydroxy-4-methyl-2-oxoglutarate (HMG) into 2 molecules of pyruvate. Also contains a secondary oxaloacetate (OAA) decarboxylase activity due to the common pyruvate enolate transition state formed following C-C bond cleavage in the retro-aldol and decarboxylation reactions (By similarity).</text>
</comment>
<comment type="catalytic activity">
    <reaction>
        <text>4-hydroxy-4-methyl-2-oxoglutarate = 2 pyruvate</text>
        <dbReference type="Rhea" id="RHEA:22748"/>
        <dbReference type="ChEBI" id="CHEBI:15361"/>
        <dbReference type="ChEBI" id="CHEBI:58276"/>
        <dbReference type="EC" id="4.1.3.17"/>
    </reaction>
</comment>
<comment type="catalytic activity">
    <reaction>
        <text>oxaloacetate + H(+) = pyruvate + CO2</text>
        <dbReference type="Rhea" id="RHEA:15641"/>
        <dbReference type="ChEBI" id="CHEBI:15361"/>
        <dbReference type="ChEBI" id="CHEBI:15378"/>
        <dbReference type="ChEBI" id="CHEBI:16452"/>
        <dbReference type="ChEBI" id="CHEBI:16526"/>
        <dbReference type="EC" id="4.1.1.112"/>
    </reaction>
</comment>
<comment type="cofactor">
    <cofactor evidence="1">
        <name>a divalent metal cation</name>
        <dbReference type="ChEBI" id="CHEBI:60240"/>
    </cofactor>
    <text evidence="1">Divalent metal cation.</text>
</comment>
<comment type="subunit">
    <text evidence="1">Homotrimer.</text>
</comment>
<comment type="similarity">
    <text evidence="2">Belongs to the class II aldolase/RraA-like family.</text>
</comment>
<accession>Q02KR3</accession>